<name>DDL_HELHP</name>
<dbReference type="EC" id="6.3.2.4" evidence="2"/>
<dbReference type="EMBL" id="AE017125">
    <property type="protein sequence ID" value="AAP76728.1"/>
    <property type="molecule type" value="Genomic_DNA"/>
</dbReference>
<dbReference type="RefSeq" id="WP_011114974.1">
    <property type="nucleotide sequence ID" value="NC_004917.1"/>
</dbReference>
<dbReference type="SMR" id="Q7VJW2"/>
<dbReference type="STRING" id="235279.HH_0131"/>
<dbReference type="KEGG" id="hhe:HH_0131"/>
<dbReference type="eggNOG" id="COG1181">
    <property type="taxonomic scope" value="Bacteria"/>
</dbReference>
<dbReference type="HOGENOM" id="CLU_039268_0_2_7"/>
<dbReference type="OrthoDB" id="9813261at2"/>
<dbReference type="UniPathway" id="UPA00219"/>
<dbReference type="Proteomes" id="UP000002495">
    <property type="component" value="Chromosome"/>
</dbReference>
<dbReference type="GO" id="GO:0005737">
    <property type="term" value="C:cytoplasm"/>
    <property type="evidence" value="ECO:0007669"/>
    <property type="project" value="UniProtKB-SubCell"/>
</dbReference>
<dbReference type="GO" id="GO:0005524">
    <property type="term" value="F:ATP binding"/>
    <property type="evidence" value="ECO:0007669"/>
    <property type="project" value="UniProtKB-KW"/>
</dbReference>
<dbReference type="GO" id="GO:0008716">
    <property type="term" value="F:D-alanine-D-alanine ligase activity"/>
    <property type="evidence" value="ECO:0007669"/>
    <property type="project" value="UniProtKB-UniRule"/>
</dbReference>
<dbReference type="GO" id="GO:0046872">
    <property type="term" value="F:metal ion binding"/>
    <property type="evidence" value="ECO:0007669"/>
    <property type="project" value="UniProtKB-KW"/>
</dbReference>
<dbReference type="GO" id="GO:0071555">
    <property type="term" value="P:cell wall organization"/>
    <property type="evidence" value="ECO:0007669"/>
    <property type="project" value="UniProtKB-KW"/>
</dbReference>
<dbReference type="GO" id="GO:0009252">
    <property type="term" value="P:peptidoglycan biosynthetic process"/>
    <property type="evidence" value="ECO:0007669"/>
    <property type="project" value="UniProtKB-UniRule"/>
</dbReference>
<dbReference type="GO" id="GO:0008360">
    <property type="term" value="P:regulation of cell shape"/>
    <property type="evidence" value="ECO:0007669"/>
    <property type="project" value="UniProtKB-KW"/>
</dbReference>
<dbReference type="Gene3D" id="3.40.50.20">
    <property type="match status" value="1"/>
</dbReference>
<dbReference type="Gene3D" id="3.30.1490.20">
    <property type="entry name" value="ATP-grasp fold, A domain"/>
    <property type="match status" value="1"/>
</dbReference>
<dbReference type="Gene3D" id="3.30.470.20">
    <property type="entry name" value="ATP-grasp fold, B domain"/>
    <property type="match status" value="1"/>
</dbReference>
<dbReference type="HAMAP" id="MF_00047">
    <property type="entry name" value="Dala_Dala_lig"/>
    <property type="match status" value="1"/>
</dbReference>
<dbReference type="InterPro" id="IPR011761">
    <property type="entry name" value="ATP-grasp"/>
</dbReference>
<dbReference type="InterPro" id="IPR013815">
    <property type="entry name" value="ATP_grasp_subdomain_1"/>
</dbReference>
<dbReference type="InterPro" id="IPR000291">
    <property type="entry name" value="D-Ala_lig_Van_CS"/>
</dbReference>
<dbReference type="InterPro" id="IPR005905">
    <property type="entry name" value="D_ala_D_ala"/>
</dbReference>
<dbReference type="InterPro" id="IPR011095">
    <property type="entry name" value="Dala_Dala_lig_C"/>
</dbReference>
<dbReference type="InterPro" id="IPR011127">
    <property type="entry name" value="Dala_Dala_lig_N"/>
</dbReference>
<dbReference type="InterPro" id="IPR016185">
    <property type="entry name" value="PreATP-grasp_dom_sf"/>
</dbReference>
<dbReference type="NCBIfam" id="TIGR01205">
    <property type="entry name" value="D_ala_D_alaTIGR"/>
    <property type="match status" value="1"/>
</dbReference>
<dbReference type="NCBIfam" id="NF002527">
    <property type="entry name" value="PRK01966.1-3"/>
    <property type="match status" value="1"/>
</dbReference>
<dbReference type="PANTHER" id="PTHR23132">
    <property type="entry name" value="D-ALANINE--D-ALANINE LIGASE"/>
    <property type="match status" value="1"/>
</dbReference>
<dbReference type="PANTHER" id="PTHR23132:SF23">
    <property type="entry name" value="D-ALANINE--D-ALANINE LIGASE B"/>
    <property type="match status" value="1"/>
</dbReference>
<dbReference type="Pfam" id="PF07478">
    <property type="entry name" value="Dala_Dala_lig_C"/>
    <property type="match status" value="1"/>
</dbReference>
<dbReference type="Pfam" id="PF01820">
    <property type="entry name" value="Dala_Dala_lig_N"/>
    <property type="match status" value="1"/>
</dbReference>
<dbReference type="SUPFAM" id="SSF56059">
    <property type="entry name" value="Glutathione synthetase ATP-binding domain-like"/>
    <property type="match status" value="1"/>
</dbReference>
<dbReference type="SUPFAM" id="SSF52440">
    <property type="entry name" value="PreATP-grasp domain"/>
    <property type="match status" value="1"/>
</dbReference>
<dbReference type="PROSITE" id="PS50975">
    <property type="entry name" value="ATP_GRASP"/>
    <property type="match status" value="1"/>
</dbReference>
<dbReference type="PROSITE" id="PS00843">
    <property type="entry name" value="DALA_DALA_LIGASE_1"/>
    <property type="match status" value="1"/>
</dbReference>
<dbReference type="PROSITE" id="PS00844">
    <property type="entry name" value="DALA_DALA_LIGASE_2"/>
    <property type="match status" value="1"/>
</dbReference>
<protein>
    <recommendedName>
        <fullName evidence="2">D-alanine--D-alanine ligase</fullName>
        <ecNumber evidence="2">6.3.2.4</ecNumber>
    </recommendedName>
    <alternativeName>
        <fullName evidence="2">D-Ala-D-Ala ligase</fullName>
    </alternativeName>
    <alternativeName>
        <fullName evidence="2">D-alanylalanine synthetase</fullName>
    </alternativeName>
</protein>
<accession>Q7VJW2</accession>
<proteinExistence type="inferred from homology"/>
<organism>
    <name type="scientific">Helicobacter hepaticus (strain ATCC 51449 / 3B1)</name>
    <dbReference type="NCBI Taxonomy" id="235279"/>
    <lineage>
        <taxon>Bacteria</taxon>
        <taxon>Pseudomonadati</taxon>
        <taxon>Campylobacterota</taxon>
        <taxon>Epsilonproteobacteria</taxon>
        <taxon>Campylobacterales</taxon>
        <taxon>Helicobacteraceae</taxon>
        <taxon>Helicobacter</taxon>
    </lineage>
</organism>
<comment type="function">
    <text evidence="2">Cell wall formation.</text>
</comment>
<comment type="catalytic activity">
    <reaction evidence="2">
        <text>2 D-alanine + ATP = D-alanyl-D-alanine + ADP + phosphate + H(+)</text>
        <dbReference type="Rhea" id="RHEA:11224"/>
        <dbReference type="ChEBI" id="CHEBI:15378"/>
        <dbReference type="ChEBI" id="CHEBI:30616"/>
        <dbReference type="ChEBI" id="CHEBI:43474"/>
        <dbReference type="ChEBI" id="CHEBI:57416"/>
        <dbReference type="ChEBI" id="CHEBI:57822"/>
        <dbReference type="ChEBI" id="CHEBI:456216"/>
        <dbReference type="EC" id="6.3.2.4"/>
    </reaction>
</comment>
<comment type="cofactor">
    <cofactor evidence="1">
        <name>Mg(2+)</name>
        <dbReference type="ChEBI" id="CHEBI:18420"/>
    </cofactor>
    <cofactor evidence="1">
        <name>Mn(2+)</name>
        <dbReference type="ChEBI" id="CHEBI:29035"/>
    </cofactor>
    <text evidence="1">Binds 2 magnesium or manganese ions per subunit.</text>
</comment>
<comment type="pathway">
    <text evidence="2">Cell wall biogenesis; peptidoglycan biosynthesis.</text>
</comment>
<comment type="subcellular location">
    <subcellularLocation>
        <location evidence="2">Cytoplasm</location>
    </subcellularLocation>
</comment>
<comment type="similarity">
    <text evidence="2">Belongs to the D-alanine--D-alanine ligase family.</text>
</comment>
<evidence type="ECO:0000250" key="1"/>
<evidence type="ECO:0000255" key="2">
    <source>
        <dbReference type="HAMAP-Rule" id="MF_00047"/>
    </source>
</evidence>
<keyword id="KW-0067">ATP-binding</keyword>
<keyword id="KW-0133">Cell shape</keyword>
<keyword id="KW-0961">Cell wall biogenesis/degradation</keyword>
<keyword id="KW-0963">Cytoplasm</keyword>
<keyword id="KW-0436">Ligase</keyword>
<keyword id="KW-0460">Magnesium</keyword>
<keyword id="KW-0464">Manganese</keyword>
<keyword id="KW-0479">Metal-binding</keyword>
<keyword id="KW-0547">Nucleotide-binding</keyword>
<keyword id="KW-0573">Peptidoglycan synthesis</keyword>
<keyword id="KW-1185">Reference proteome</keyword>
<sequence length="350" mass="39726">MKFDVLFGGVSFEHEISIVSAVALKKVLGESIGNFIFLDSSHRFYLIPLDSMKSKLFSSGDYKKCTEIFLQRGAFVKKTFFGFKPIIPHTLINLIHGADGEDGSVSALLDFYHLPFIGPRIESSVMSFNKVFTKIFAAQRGVKVLDYEILTRANPHLKHIAYPIILKPARLGSSIGVSVINEEKELDYGRDLAFEYDDTIIAESFKSGVKEYNLAGCRVKNGSQDEYRFSIIEEPSKKELLDFERKYLDFSRTAQVLQADISSALVAKLQENFMKLYENAFEGALIRCDFFVIDDEVYLNEINPIPGSMANYLFEDFVGVLTELAYNLPKKHSIKVSYKYIEQIHYAKGK</sequence>
<gene>
    <name evidence="2" type="primary">ddl</name>
    <name type="ordered locus">HH_0131</name>
</gene>
<feature type="chain" id="PRO_0000177829" description="D-alanine--D-alanine ligase">
    <location>
        <begin position="1"/>
        <end position="350"/>
    </location>
</feature>
<feature type="domain" description="ATP-grasp" evidence="2">
    <location>
        <begin position="134"/>
        <end position="337"/>
    </location>
</feature>
<feature type="binding site" evidence="2">
    <location>
        <begin position="160"/>
        <end position="212"/>
    </location>
    <ligand>
        <name>ATP</name>
        <dbReference type="ChEBI" id="CHEBI:30616"/>
    </ligand>
</feature>
<feature type="binding site" evidence="2">
    <location>
        <position position="289"/>
    </location>
    <ligand>
        <name>Mg(2+)</name>
        <dbReference type="ChEBI" id="CHEBI:18420"/>
        <label>1</label>
    </ligand>
</feature>
<feature type="binding site" evidence="2">
    <location>
        <position position="301"/>
    </location>
    <ligand>
        <name>Mg(2+)</name>
        <dbReference type="ChEBI" id="CHEBI:18420"/>
        <label>1</label>
    </ligand>
</feature>
<feature type="binding site" evidence="2">
    <location>
        <position position="301"/>
    </location>
    <ligand>
        <name>Mg(2+)</name>
        <dbReference type="ChEBI" id="CHEBI:18420"/>
        <label>2</label>
    </ligand>
</feature>
<feature type="binding site" evidence="2">
    <location>
        <position position="303"/>
    </location>
    <ligand>
        <name>Mg(2+)</name>
        <dbReference type="ChEBI" id="CHEBI:18420"/>
        <label>2</label>
    </ligand>
</feature>
<reference key="1">
    <citation type="journal article" date="2003" name="Proc. Natl. Acad. Sci. U.S.A.">
        <title>The complete genome sequence of the carcinogenic bacterium Helicobacter hepaticus.</title>
        <authorList>
            <person name="Suerbaum S."/>
            <person name="Josenhans C."/>
            <person name="Sterzenbach T."/>
            <person name="Drescher B."/>
            <person name="Brandt P."/>
            <person name="Bell M."/>
            <person name="Droege M."/>
            <person name="Fartmann B."/>
            <person name="Fischer H.-P."/>
            <person name="Ge Z."/>
            <person name="Hoerster A."/>
            <person name="Holland R."/>
            <person name="Klein K."/>
            <person name="Koenig J."/>
            <person name="Macko L."/>
            <person name="Mendz G.L."/>
            <person name="Nyakatura G."/>
            <person name="Schauer D.B."/>
            <person name="Shen Z."/>
            <person name="Weber J."/>
            <person name="Frosch M."/>
            <person name="Fox J.G."/>
        </authorList>
    </citation>
    <scope>NUCLEOTIDE SEQUENCE [LARGE SCALE GENOMIC DNA]</scope>
    <source>
        <strain>ATCC 51449 / 3B1</strain>
    </source>
</reference>